<reference key="1">
    <citation type="journal article" date="1988" name="Proc. Natl. Acad. Sci. U.S.A.">
        <title>DNA polymerase I gene of Saccharomyces cerevisiae: nucleotide sequence, mapping of a temperature-sensitive mutation, and protein homology with other DNA polymerases.</title>
        <authorList>
            <person name="Pizzagalli A."/>
            <person name="Valsasnini P."/>
            <person name="Plevani P."/>
            <person name="Lucchini G."/>
        </authorList>
    </citation>
    <scope>NUCLEOTIDE SEQUENCE [GENOMIC DNA]</scope>
    <scope>VARIANT ARG-493</scope>
</reference>
<reference key="2">
    <citation type="journal article" date="1996" name="Yeast">
        <title>The sequence of a 21.3 kb DNA fragment from the left arm of yeast chromosome XIV reveals LEU4, MET4, POL1, RAS2, and six new open reading frames.</title>
        <authorList>
            <person name="Saiz J.E."/>
            <person name="Buitrago M.J."/>
            <person name="Soler A."/>
            <person name="del Rey F."/>
            <person name="Revuelta J.L."/>
        </authorList>
    </citation>
    <scope>NUCLEOTIDE SEQUENCE [GENOMIC DNA]</scope>
    <source>
        <strain>ATCC 96604 / S288c / FY1679</strain>
    </source>
</reference>
<reference key="3">
    <citation type="journal article" date="1997" name="Nature">
        <title>The nucleotide sequence of Saccharomyces cerevisiae chromosome XIV and its evolutionary implications.</title>
        <authorList>
            <person name="Philippsen P."/>
            <person name="Kleine K."/>
            <person name="Poehlmann R."/>
            <person name="Duesterhoeft A."/>
            <person name="Hamberg K."/>
            <person name="Hegemann J.H."/>
            <person name="Obermaier B."/>
            <person name="Urrestarazu L.A."/>
            <person name="Aert R."/>
            <person name="Albermann K."/>
            <person name="Altmann R."/>
            <person name="Andre B."/>
            <person name="Baladron V."/>
            <person name="Ballesta J.P.G."/>
            <person name="Becam A.-M."/>
            <person name="Beinhauer J.D."/>
            <person name="Boskovic J."/>
            <person name="Buitrago M.J."/>
            <person name="Bussereau F."/>
            <person name="Coster F."/>
            <person name="Crouzet M."/>
            <person name="D'Angelo M."/>
            <person name="Dal Pero F."/>
            <person name="De Antoni A."/>
            <person name="del Rey F."/>
            <person name="Doignon F."/>
            <person name="Domdey H."/>
            <person name="Dubois E."/>
            <person name="Fiedler T.A."/>
            <person name="Fleig U."/>
            <person name="Floeth M."/>
            <person name="Fritz C."/>
            <person name="Gaillardin C."/>
            <person name="Garcia-Cantalejo J.M."/>
            <person name="Glansdorff N."/>
            <person name="Goffeau A."/>
            <person name="Gueldener U."/>
            <person name="Herbert C.J."/>
            <person name="Heumann K."/>
            <person name="Heuss-Neitzel D."/>
            <person name="Hilbert H."/>
            <person name="Hinni K."/>
            <person name="Iraqui Houssaini I."/>
            <person name="Jacquet M."/>
            <person name="Jimenez A."/>
            <person name="Jonniaux J.-L."/>
            <person name="Karpfinger-Hartl L."/>
            <person name="Lanfranchi G."/>
            <person name="Lepingle A."/>
            <person name="Levesque H."/>
            <person name="Lyck R."/>
            <person name="Maftahi M."/>
            <person name="Mallet L."/>
            <person name="Maurer C.T.C."/>
            <person name="Messenguy F."/>
            <person name="Mewes H.-W."/>
            <person name="Moestl D."/>
            <person name="Nasr F."/>
            <person name="Nicaud J.-M."/>
            <person name="Niedenthal R.K."/>
            <person name="Pandolfo D."/>
            <person name="Pierard A."/>
            <person name="Piravandi E."/>
            <person name="Planta R.J."/>
            <person name="Pohl T.M."/>
            <person name="Purnelle B."/>
            <person name="Rebischung C."/>
            <person name="Remacha M.A."/>
            <person name="Revuelta J.L."/>
            <person name="Rinke M."/>
            <person name="Saiz J.E."/>
            <person name="Sartorello F."/>
            <person name="Scherens B."/>
            <person name="Sen-Gupta M."/>
            <person name="Soler-Mira A."/>
            <person name="Urbanus J.H.M."/>
            <person name="Valle G."/>
            <person name="Van Dyck L."/>
            <person name="Verhasselt P."/>
            <person name="Vierendeels F."/>
            <person name="Vissers S."/>
            <person name="Voet M."/>
            <person name="Volckaert G."/>
            <person name="Wach A."/>
            <person name="Wambutt R."/>
            <person name="Wedler H."/>
            <person name="Zollner A."/>
            <person name="Hani J."/>
        </authorList>
    </citation>
    <scope>NUCLEOTIDE SEQUENCE [LARGE SCALE GENOMIC DNA]</scope>
    <source>
        <strain>ATCC 204508 / S288c</strain>
    </source>
</reference>
<reference key="4">
    <citation type="journal article" date="2014" name="G3 (Bethesda)">
        <title>The reference genome sequence of Saccharomyces cerevisiae: Then and now.</title>
        <authorList>
            <person name="Engel S.R."/>
            <person name="Dietrich F.S."/>
            <person name="Fisk D.G."/>
            <person name="Binkley G."/>
            <person name="Balakrishnan R."/>
            <person name="Costanzo M.C."/>
            <person name="Dwight S.S."/>
            <person name="Hitz B.C."/>
            <person name="Karra K."/>
            <person name="Nash R.S."/>
            <person name="Weng S."/>
            <person name="Wong E.D."/>
            <person name="Lloyd P."/>
            <person name="Skrzypek M.S."/>
            <person name="Miyasato S.R."/>
            <person name="Simison M."/>
            <person name="Cherry J.M."/>
        </authorList>
    </citation>
    <scope>GENOME REANNOTATION</scope>
    <source>
        <strain>ATCC 204508 / S288c</strain>
    </source>
</reference>
<reference key="5">
    <citation type="journal article" date="1993" name="Mol. Microbiol.">
        <title>The general amino acid control regulates MET4, which encodes a methionine-pathway-specific transcriptional activator of Saccharomyces cerevisiae.</title>
        <authorList>
            <person name="Mountain H.A."/>
            <person name="Bystroem A.S."/>
            <person name="Korch C."/>
        </authorList>
    </citation>
    <scope>NUCLEOTIDE SEQUENCE [GENOMIC DNA] OF 1-26</scope>
    <source>
        <strain>ATCC 204508 / S288c</strain>
    </source>
</reference>
<reference key="6">
    <citation type="journal article" date="1988" name="Biochim. Biophys. Acta">
        <title>The yeast DNA polymerase-primase complex: genes and proteins.</title>
        <authorList>
            <person name="Plevani P."/>
            <person name="Foiani M."/>
            <person name="Muzi Falconi M."/>
            <person name="Pizzagalli A."/>
            <person name="Santocanale C."/>
            <person name="Francesconi S."/>
            <person name="Valsasnini P."/>
            <person name="Comedini A."/>
            <person name="Piatti S."/>
            <person name="Lucchini G."/>
        </authorList>
    </citation>
    <scope>COMPOSITION OF THE DNA POLYMERASE ALPHA:PRIMASE COMPLEX</scope>
</reference>
<reference key="7">
    <citation type="journal article" date="1996" name="J. Biol. Chem.">
        <title>Phosphorylation of the DNA polymerase alpha-primase B subunit is dependent on its association with the p180 polypeptide.</title>
        <authorList>
            <person name="Ferrari M."/>
            <person name="Lucchini G."/>
            <person name="Plevani P."/>
            <person name="Foiani M."/>
        </authorList>
    </citation>
    <scope>PHOSPHORYLATION</scope>
    <scope>IDENTIFICATION IN THE DNA POLYMERASE ALPHA:PRIMASE COMPLEX</scope>
</reference>
<reference key="8">
    <citation type="journal article" date="1997" name="Mol. Cell. Biol.">
        <title>The Saccharomyces cerevisiae DNA polymerase alpha catalytic subunit interacts with Cdc68/Spt16 and with Pob3, a protein similar to an HMG1-like protein.</title>
        <authorList>
            <person name="Wittmeyer J."/>
            <person name="Formosa T."/>
        </authorList>
    </citation>
    <scope>INTERACTION WITH POB3 AND SPT16</scope>
</reference>
<reference key="9">
    <citation type="journal article" date="2000" name="Genes Dev.">
        <title>The Saccharomyces telomere-binding protein Cdc13p interacts with both the catalytic subunit of DNA polymerase alpha and the telomerase-associated est1 protein.</title>
        <authorList>
            <person name="Qi H."/>
            <person name="Zakian V.A."/>
        </authorList>
    </citation>
    <scope>FUNCTION</scope>
    <scope>INTERACTION WITH CDC13</scope>
    <scope>MUTAGENESIS OF ASP-236; GLU-238 AND PRO-241</scope>
</reference>
<reference key="10">
    <citation type="journal article" date="2003" name="Nature">
        <title>Global analysis of protein expression in yeast.</title>
        <authorList>
            <person name="Ghaemmaghami S."/>
            <person name="Huh W.-K."/>
            <person name="Bower K."/>
            <person name="Howson R.W."/>
            <person name="Belle A."/>
            <person name="Dephoure N."/>
            <person name="O'Shea E.K."/>
            <person name="Weissman J.S."/>
        </authorList>
    </citation>
    <scope>LEVEL OF PROTEIN EXPRESSION [LARGE SCALE ANALYSIS]</scope>
</reference>
<reference key="11">
    <citation type="journal article" date="2006" name="J. Biol. Chem.">
        <title>A conserved Hsp10-like domain in Mcm10 is required to stabilize the catalytic subunit of DNA polymerase-alpha in budding yeast.</title>
        <authorList>
            <person name="Ricke R.M."/>
            <person name="Bielinsky A.-K."/>
        </authorList>
    </citation>
    <scope>INTERACTION WITH MCM10</scope>
</reference>
<reference key="12">
    <citation type="journal article" date="2007" name="J. Proteome Res.">
        <title>Large-scale phosphorylation analysis of alpha-factor-arrested Saccharomyces cerevisiae.</title>
        <authorList>
            <person name="Li X."/>
            <person name="Gerber S.A."/>
            <person name="Rudner A.D."/>
            <person name="Beausoleil S.A."/>
            <person name="Haas W."/>
            <person name="Villen J."/>
            <person name="Elias J.E."/>
            <person name="Gygi S.P."/>
        </authorList>
    </citation>
    <scope>PHOSPHORYLATION [LARGE SCALE ANALYSIS] AT SER-170 AND THR-313</scope>
    <scope>IDENTIFICATION BY MASS SPECTROMETRY [LARGE SCALE ANALYSIS]</scope>
    <source>
        <strain>ADR376</strain>
    </source>
</reference>
<reference key="13">
    <citation type="journal article" date="2007" name="Proc. Natl. Acad. Sci. U.S.A.">
        <title>Analysis of phosphorylation sites on proteins from Saccharomyces cerevisiae by electron transfer dissociation (ETD) mass spectrometry.</title>
        <authorList>
            <person name="Chi A."/>
            <person name="Huttenhower C."/>
            <person name="Geer L.Y."/>
            <person name="Coon J.J."/>
            <person name="Syka J.E.P."/>
            <person name="Bai D.L."/>
            <person name="Shabanowitz J."/>
            <person name="Burke D.J."/>
            <person name="Troyanskaya O.G."/>
            <person name="Hunt D.F."/>
        </authorList>
    </citation>
    <scope>IDENTIFICATION BY MASS SPECTROMETRY [LARGE SCALE ANALYSIS]</scope>
</reference>
<reference key="14">
    <citation type="journal article" date="2008" name="Mol. Cell. Proteomics">
        <title>A multidimensional chromatography technology for in-depth phosphoproteome analysis.</title>
        <authorList>
            <person name="Albuquerque C.P."/>
            <person name="Smolka M.B."/>
            <person name="Payne S.H."/>
            <person name="Bafna V."/>
            <person name="Eng J."/>
            <person name="Zhou H."/>
        </authorList>
    </citation>
    <scope>PHOSPHORYLATION [LARGE SCALE ANALYSIS] AT SER-31; SER-240 AND SER-274</scope>
    <scope>IDENTIFICATION BY MASS SPECTROMETRY [LARGE SCALE ANALYSIS]</scope>
</reference>
<reference key="15">
    <citation type="journal article" date="2009" name="Science">
        <title>Global analysis of Cdk1 substrate phosphorylation sites provides insights into evolution.</title>
        <authorList>
            <person name="Holt L.J."/>
            <person name="Tuch B.B."/>
            <person name="Villen J."/>
            <person name="Johnson A.D."/>
            <person name="Gygi S.P."/>
            <person name="Morgan D.O."/>
        </authorList>
    </citation>
    <scope>PHOSPHORYLATION [LARGE SCALE ANALYSIS] AT SER-31; SER-82; SER-83; SER-84; SER-169; SER-170; THR-172; SER-240; SER-274; THR-309 AND THR-313</scope>
    <scope>IDENTIFICATION BY MASS SPECTROMETRY [LARGE SCALE ANALYSIS]</scope>
</reference>
<reference key="16">
    <citation type="journal article" date="2012" name="Nat. Chem. Biol.">
        <title>Eukaryotic DNA polymerases require an iron-sulfur cluster for the formation of active complexes.</title>
        <authorList>
            <person name="Netz D.J."/>
            <person name="Stith C.M."/>
            <person name="Stumpfig M."/>
            <person name="Kopf G."/>
            <person name="Vogel D."/>
            <person name="Genau H.M."/>
            <person name="Stodola J.L."/>
            <person name="Lill R."/>
            <person name="Burgers P.M."/>
            <person name="Pierik A.J."/>
        </authorList>
    </citation>
    <scope>FUNCTION</scope>
    <scope>CATALYTIC ACTIVITY</scope>
</reference>
<reference key="17">
    <citation type="journal article" date="2012" name="Proc. Natl. Acad. Sci. U.S.A.">
        <title>N-terminal acetylome analyses and functional insights of the N-terminal acetyltransferase NatB.</title>
        <authorList>
            <person name="Van Damme P."/>
            <person name="Lasa M."/>
            <person name="Polevoda B."/>
            <person name="Gazquez C."/>
            <person name="Elosegui-Artola A."/>
            <person name="Kim D.S."/>
            <person name="De Juan-Pardo E."/>
            <person name="Demeyer K."/>
            <person name="Hole K."/>
            <person name="Larrea E."/>
            <person name="Timmerman E."/>
            <person name="Prieto J."/>
            <person name="Arnesen T."/>
            <person name="Sherman F."/>
            <person name="Gevaert K."/>
            <person name="Aldabe R."/>
        </authorList>
    </citation>
    <scope>ACETYLATION [LARGE SCALE ANALYSIS] AT SER-2</scope>
    <scope>CLEAVAGE OF INITIATOR METHIONINE [LARGE SCALE ANALYSIS]</scope>
    <scope>IDENTIFICATION BY MASS SPECTROMETRY [LARGE SCALE ANALYSIS]</scope>
</reference>
<reference key="18">
    <citation type="journal article" date="2019" name="Nat. Commun.">
        <title>Roles for DNA polymerase delta in initiating and terminating leading strand DNA replication.</title>
        <authorList>
            <person name="Zhou Z.X."/>
            <person name="Lujan S.A."/>
            <person name="Burkholder A.B."/>
            <person name="Garbacz M.A."/>
            <person name="Kunkel T.A."/>
        </authorList>
    </citation>
    <scope>FUNCTION</scope>
    <scope>MUTAGENESIS OF LEU-868</scope>
</reference>
<reference evidence="17" key="19">
    <citation type="journal article" date="2009" name="EMBO J.">
        <title>3D architecture of DNA Pol alpha reveals the functional core of multi-subunit replicative polymerases.</title>
        <authorList>
            <person name="Klinge S."/>
            <person name="Nunez-Ramirez R."/>
            <person name="Llorca O."/>
            <person name="Pellegrini L."/>
        </authorList>
    </citation>
    <scope>X-RAY CRYSTALLOGRAPHY (2.50 ANGSTROMS) OF 1263-1468 IN COMPLEX WITH ZINC AND POL12</scope>
</reference>
<evidence type="ECO:0000250" key="1">
    <source>
        <dbReference type="UniProtKB" id="P15436"/>
    </source>
</evidence>
<evidence type="ECO:0000255" key="2"/>
<evidence type="ECO:0000256" key="3">
    <source>
        <dbReference type="SAM" id="MobiDB-lite"/>
    </source>
</evidence>
<evidence type="ECO:0000269" key="4">
    <source>
    </source>
</evidence>
<evidence type="ECO:0000269" key="5">
    <source>
    </source>
</evidence>
<evidence type="ECO:0000269" key="6">
    <source>
    </source>
</evidence>
<evidence type="ECO:0000269" key="7">
    <source>
    </source>
</evidence>
<evidence type="ECO:0000269" key="8">
    <source>
    </source>
</evidence>
<evidence type="ECO:0000269" key="9">
    <source>
    </source>
</evidence>
<evidence type="ECO:0000269" key="10">
    <source>
    </source>
</evidence>
<evidence type="ECO:0000269" key="11">
    <source>
    </source>
</evidence>
<evidence type="ECO:0000269" key="12">
    <source>
    </source>
</evidence>
<evidence type="ECO:0000269" key="13">
    <source>
    </source>
</evidence>
<evidence type="ECO:0000305" key="14"/>
<evidence type="ECO:0000305" key="15">
    <source>
    </source>
</evidence>
<evidence type="ECO:0000305" key="16">
    <source>
    </source>
</evidence>
<evidence type="ECO:0007744" key="17">
    <source>
        <dbReference type="PDB" id="3FLO"/>
    </source>
</evidence>
<evidence type="ECO:0007744" key="18">
    <source>
    </source>
</evidence>
<evidence type="ECO:0007744" key="19">
    <source>
    </source>
</evidence>
<evidence type="ECO:0007744" key="20">
    <source>
    </source>
</evidence>
<evidence type="ECO:0007744" key="21">
    <source>
    </source>
</evidence>
<evidence type="ECO:0007829" key="22">
    <source>
        <dbReference type="PDB" id="3FLO"/>
    </source>
</evidence>
<evidence type="ECO:0007829" key="23">
    <source>
        <dbReference type="PDB" id="3OIQ"/>
    </source>
</evidence>
<evidence type="ECO:0007829" key="24">
    <source>
        <dbReference type="PDB" id="4B08"/>
    </source>
</evidence>
<evidence type="ECO:0007829" key="25">
    <source>
        <dbReference type="PDB" id="4C93"/>
    </source>
</evidence>
<evidence type="ECO:0007829" key="26">
    <source>
        <dbReference type="PDB" id="4FVM"/>
    </source>
</evidence>
<evidence type="ECO:0007829" key="27">
    <source>
        <dbReference type="PDB" id="4FXD"/>
    </source>
</evidence>
<proteinExistence type="evidence at protein level"/>
<dbReference type="EC" id="2.7.7.7"/>
<dbReference type="EMBL" id="J03268">
    <property type="protein sequence ID" value="AAA34888.1"/>
    <property type="molecule type" value="Genomic_DNA"/>
</dbReference>
<dbReference type="EMBL" id="Z50161">
    <property type="protein sequence ID" value="CAA90524.1"/>
    <property type="molecule type" value="Genomic_DNA"/>
</dbReference>
<dbReference type="EMBL" id="Z71378">
    <property type="protein sequence ID" value="CAA95978.1"/>
    <property type="molecule type" value="Genomic_DNA"/>
</dbReference>
<dbReference type="EMBL" id="Z12126">
    <property type="protein sequence ID" value="CAA78111.1"/>
    <property type="molecule type" value="Genomic_DNA"/>
</dbReference>
<dbReference type="EMBL" id="BK006947">
    <property type="protein sequence ID" value="DAA10443.1"/>
    <property type="molecule type" value="Genomic_DNA"/>
</dbReference>
<dbReference type="PIR" id="S58250">
    <property type="entry name" value="S58250"/>
</dbReference>
<dbReference type="RefSeq" id="NP_014297.3">
    <property type="nucleotide sequence ID" value="NM_001182940.3"/>
</dbReference>
<dbReference type="PDB" id="3FLO">
    <property type="method" value="X-ray"/>
    <property type="resolution" value="2.50 A"/>
    <property type="chains" value="B/D/F/H=1263-1468"/>
</dbReference>
<dbReference type="PDB" id="3OIQ">
    <property type="method" value="X-ray"/>
    <property type="resolution" value="2.40 A"/>
    <property type="chains" value="B=215-250"/>
</dbReference>
<dbReference type="PDB" id="4B08">
    <property type="method" value="X-ray"/>
    <property type="resolution" value="2.67 A"/>
    <property type="chains" value="A=349-1258"/>
</dbReference>
<dbReference type="PDB" id="4C93">
    <property type="method" value="X-ray"/>
    <property type="resolution" value="2.69 A"/>
    <property type="chains" value="D/E=137-149"/>
</dbReference>
<dbReference type="PDB" id="4FVM">
    <property type="method" value="X-ray"/>
    <property type="resolution" value="2.30 A"/>
    <property type="chains" value="A=349-1258"/>
</dbReference>
<dbReference type="PDB" id="4FXD">
    <property type="method" value="X-ray"/>
    <property type="resolution" value="3.00 A"/>
    <property type="chains" value="A/B=349-1258"/>
</dbReference>
<dbReference type="PDB" id="4FYD">
    <property type="method" value="X-ray"/>
    <property type="resolution" value="3.10 A"/>
    <property type="chains" value="A/B=349-1258"/>
</dbReference>
<dbReference type="PDB" id="8B9A">
    <property type="method" value="EM"/>
    <property type="resolution" value="3.50 A"/>
    <property type="chains" value="J=1-1468"/>
</dbReference>
<dbReference type="PDB" id="8B9B">
    <property type="method" value="EM"/>
    <property type="resolution" value="3.50 A"/>
    <property type="chains" value="J=1-1468"/>
</dbReference>
<dbReference type="PDB" id="8B9C">
    <property type="method" value="EM"/>
    <property type="resolution" value="4.60 A"/>
    <property type="chains" value="J=1-1468"/>
</dbReference>
<dbReference type="PDB" id="8FOC">
    <property type="method" value="EM"/>
    <property type="resolution" value="3.70 A"/>
    <property type="chains" value="1=1-1468"/>
</dbReference>
<dbReference type="PDB" id="8FOD">
    <property type="method" value="EM"/>
    <property type="resolution" value="3.80 A"/>
    <property type="chains" value="1=1-1468"/>
</dbReference>
<dbReference type="PDB" id="8FOE">
    <property type="method" value="EM"/>
    <property type="resolution" value="5.60 A"/>
    <property type="chains" value="1=1-1468"/>
</dbReference>
<dbReference type="PDB" id="8FOH">
    <property type="method" value="EM"/>
    <property type="resolution" value="4.93 A"/>
    <property type="chains" value="1=1-1468"/>
</dbReference>
<dbReference type="PDB" id="8FOJ">
    <property type="method" value="EM"/>
    <property type="resolution" value="4.80 A"/>
    <property type="chains" value="1=1-1468"/>
</dbReference>
<dbReference type="PDB" id="8FOK">
    <property type="method" value="EM"/>
    <property type="resolution" value="3.56 A"/>
    <property type="chains" value="1=1-1468"/>
</dbReference>
<dbReference type="PDBsum" id="3FLO"/>
<dbReference type="PDBsum" id="3OIQ"/>
<dbReference type="PDBsum" id="4B08"/>
<dbReference type="PDBsum" id="4C93"/>
<dbReference type="PDBsum" id="4FVM"/>
<dbReference type="PDBsum" id="4FXD"/>
<dbReference type="PDBsum" id="4FYD"/>
<dbReference type="PDBsum" id="8B9A"/>
<dbReference type="PDBsum" id="8B9B"/>
<dbReference type="PDBsum" id="8B9C"/>
<dbReference type="PDBsum" id="8FOC"/>
<dbReference type="PDBsum" id="8FOD"/>
<dbReference type="PDBsum" id="8FOE"/>
<dbReference type="PDBsum" id="8FOH"/>
<dbReference type="PDBsum" id="8FOJ"/>
<dbReference type="PDBsum" id="8FOK"/>
<dbReference type="EMDB" id="EMD-15924"/>
<dbReference type="SMR" id="P13382"/>
<dbReference type="BioGRID" id="35721">
    <property type="interactions" value="722"/>
</dbReference>
<dbReference type="ComplexPortal" id="CPX-2091">
    <property type="entry name" value="DNA polymerase alpha:primase complex"/>
</dbReference>
<dbReference type="DIP" id="DIP-2526N"/>
<dbReference type="FunCoup" id="P13382">
    <property type="interactions" value="1144"/>
</dbReference>
<dbReference type="IntAct" id="P13382">
    <property type="interactions" value="22"/>
</dbReference>
<dbReference type="MINT" id="P13382"/>
<dbReference type="STRING" id="4932.YNL102W"/>
<dbReference type="GlyGen" id="P13382">
    <property type="glycosylation" value="2 sites, 1 O-linked glycan (2 sites)"/>
</dbReference>
<dbReference type="iPTMnet" id="P13382"/>
<dbReference type="PaxDb" id="4932-YNL102W"/>
<dbReference type="PeptideAtlas" id="P13382"/>
<dbReference type="EnsemblFungi" id="YNL102W_mRNA">
    <property type="protein sequence ID" value="YNL102W"/>
    <property type="gene ID" value="YNL102W"/>
</dbReference>
<dbReference type="GeneID" id="855621"/>
<dbReference type="KEGG" id="sce:YNL102W"/>
<dbReference type="AGR" id="SGD:S000005046"/>
<dbReference type="SGD" id="S000005046">
    <property type="gene designation" value="POL1"/>
</dbReference>
<dbReference type="VEuPathDB" id="FungiDB:YNL102W"/>
<dbReference type="eggNOG" id="KOG0970">
    <property type="taxonomic scope" value="Eukaryota"/>
</dbReference>
<dbReference type="GeneTree" id="ENSGT00550000074891"/>
<dbReference type="HOGENOM" id="CLU_001718_1_0_1"/>
<dbReference type="InParanoid" id="P13382"/>
<dbReference type="OMA" id="MTKMNVG"/>
<dbReference type="OrthoDB" id="6755010at2759"/>
<dbReference type="BioCyc" id="YEAST:G3O-33130-MONOMER"/>
<dbReference type="BRENDA" id="2.7.7.7">
    <property type="organism ID" value="984"/>
</dbReference>
<dbReference type="Reactome" id="R-SCE-113501">
    <property type="pathway name" value="Inhibition of replication initiation of damaged DNA by RB1/E2F1"/>
</dbReference>
<dbReference type="Reactome" id="R-SCE-68952">
    <property type="pathway name" value="DNA replication initiation"/>
</dbReference>
<dbReference type="Reactome" id="R-SCE-68962">
    <property type="pathway name" value="Activation of the pre-replicative complex"/>
</dbReference>
<dbReference type="Reactome" id="R-SCE-69091">
    <property type="pathway name" value="Polymerase switching"/>
</dbReference>
<dbReference type="Reactome" id="R-SCE-69166">
    <property type="pathway name" value="Removal of the Flap Intermediate"/>
</dbReference>
<dbReference type="Reactome" id="R-SCE-69183">
    <property type="pathway name" value="Processive synthesis on the lagging strand"/>
</dbReference>
<dbReference type="BioGRID-ORCS" id="855621">
    <property type="hits" value="5 hits in 10 CRISPR screens"/>
</dbReference>
<dbReference type="EvolutionaryTrace" id="P13382"/>
<dbReference type="PRO" id="PR:P13382"/>
<dbReference type="Proteomes" id="UP000002311">
    <property type="component" value="Chromosome XIV"/>
</dbReference>
<dbReference type="RNAct" id="P13382">
    <property type="molecule type" value="protein"/>
</dbReference>
<dbReference type="GO" id="GO:0005658">
    <property type="term" value="C:alpha DNA polymerase:primase complex"/>
    <property type="evidence" value="ECO:0000314"/>
    <property type="project" value="SGD"/>
</dbReference>
<dbReference type="GO" id="GO:0005739">
    <property type="term" value="C:mitochondrion"/>
    <property type="evidence" value="ECO:0007005"/>
    <property type="project" value="SGD"/>
</dbReference>
<dbReference type="GO" id="GO:0005657">
    <property type="term" value="C:replication fork"/>
    <property type="evidence" value="ECO:0000314"/>
    <property type="project" value="SGD"/>
</dbReference>
<dbReference type="GO" id="GO:0051539">
    <property type="term" value="F:4 iron, 4 sulfur cluster binding"/>
    <property type="evidence" value="ECO:0007669"/>
    <property type="project" value="UniProtKB-KW"/>
</dbReference>
<dbReference type="GO" id="GO:0003682">
    <property type="term" value="F:chromatin binding"/>
    <property type="evidence" value="ECO:0000318"/>
    <property type="project" value="GO_Central"/>
</dbReference>
<dbReference type="GO" id="GO:0003688">
    <property type="term" value="F:DNA replication origin binding"/>
    <property type="evidence" value="ECO:0000318"/>
    <property type="project" value="GO_Central"/>
</dbReference>
<dbReference type="GO" id="GO:0003887">
    <property type="term" value="F:DNA-directed DNA polymerase activity"/>
    <property type="evidence" value="ECO:0000314"/>
    <property type="project" value="SGD"/>
</dbReference>
<dbReference type="GO" id="GO:0000510">
    <property type="term" value="F:H3-H4 histone complex chaperone activity"/>
    <property type="evidence" value="ECO:0000314"/>
    <property type="project" value="SGD"/>
</dbReference>
<dbReference type="GO" id="GO:0000166">
    <property type="term" value="F:nucleotide binding"/>
    <property type="evidence" value="ECO:0007669"/>
    <property type="project" value="InterPro"/>
</dbReference>
<dbReference type="GO" id="GO:0003697">
    <property type="term" value="F:single-stranded DNA binding"/>
    <property type="evidence" value="ECO:0000318"/>
    <property type="project" value="GO_Central"/>
</dbReference>
<dbReference type="GO" id="GO:0008270">
    <property type="term" value="F:zinc ion binding"/>
    <property type="evidence" value="ECO:0007669"/>
    <property type="project" value="UniProtKB-KW"/>
</dbReference>
<dbReference type="GO" id="GO:0006260">
    <property type="term" value="P:DNA replication"/>
    <property type="evidence" value="ECO:0000315"/>
    <property type="project" value="SGD"/>
</dbReference>
<dbReference type="GO" id="GO:0006270">
    <property type="term" value="P:DNA replication initiation"/>
    <property type="evidence" value="ECO:0000303"/>
    <property type="project" value="ComplexPortal"/>
</dbReference>
<dbReference type="GO" id="GO:0000731">
    <property type="term" value="P:DNA synthesis involved in DNA repair"/>
    <property type="evidence" value="ECO:0000315"/>
    <property type="project" value="SGD"/>
</dbReference>
<dbReference type="GO" id="GO:0006302">
    <property type="term" value="P:double-strand break repair"/>
    <property type="evidence" value="ECO:0000315"/>
    <property type="project" value="SGD"/>
</dbReference>
<dbReference type="GO" id="GO:0006273">
    <property type="term" value="P:lagging strand elongation"/>
    <property type="evidence" value="ECO:0000318"/>
    <property type="project" value="GO_Central"/>
</dbReference>
<dbReference type="GO" id="GO:0006272">
    <property type="term" value="P:leading strand elongation"/>
    <property type="evidence" value="ECO:0000318"/>
    <property type="project" value="GO_Central"/>
</dbReference>
<dbReference type="GO" id="GO:1902975">
    <property type="term" value="P:mitotic DNA replication initiation"/>
    <property type="evidence" value="ECO:0000318"/>
    <property type="project" value="GO_Central"/>
</dbReference>
<dbReference type="GO" id="GO:0006279">
    <property type="term" value="P:premeiotic DNA replication"/>
    <property type="evidence" value="ECO:0000315"/>
    <property type="project" value="SGD"/>
</dbReference>
<dbReference type="GO" id="GO:0006278">
    <property type="term" value="P:RNA-templated DNA biosynthetic process"/>
    <property type="evidence" value="ECO:0000314"/>
    <property type="project" value="SGD"/>
</dbReference>
<dbReference type="CDD" id="cd05776">
    <property type="entry name" value="DNA_polB_alpha_exo"/>
    <property type="match status" value="1"/>
</dbReference>
<dbReference type="CDD" id="cd05532">
    <property type="entry name" value="POLBc_alpha"/>
    <property type="match status" value="1"/>
</dbReference>
<dbReference type="FunFam" id="1.10.132.60:FF:000004">
    <property type="entry name" value="DNA polymerase"/>
    <property type="match status" value="1"/>
</dbReference>
<dbReference type="FunFam" id="1.10.3200.20:FF:000002">
    <property type="entry name" value="DNA polymerase"/>
    <property type="match status" value="1"/>
</dbReference>
<dbReference type="FunFam" id="3.30.420.10:FF:000036">
    <property type="entry name" value="DNA polymerase"/>
    <property type="match status" value="1"/>
</dbReference>
<dbReference type="Gene3D" id="2.40.50.730">
    <property type="match status" value="1"/>
</dbReference>
<dbReference type="Gene3D" id="3.30.70.2820">
    <property type="match status" value="1"/>
</dbReference>
<dbReference type="Gene3D" id="1.10.3200.20">
    <property type="entry name" value="DNA Polymerase alpha, zinc finger"/>
    <property type="match status" value="1"/>
</dbReference>
<dbReference type="Gene3D" id="1.10.132.60">
    <property type="entry name" value="DNA polymerase family B, C-terminal domain"/>
    <property type="match status" value="1"/>
</dbReference>
<dbReference type="Gene3D" id="3.90.1600.10">
    <property type="entry name" value="Palm domain of DNA polymerase"/>
    <property type="match status" value="2"/>
</dbReference>
<dbReference type="Gene3D" id="3.30.420.10">
    <property type="entry name" value="Ribonuclease H-like superfamily/Ribonuclease H"/>
    <property type="match status" value="1"/>
</dbReference>
<dbReference type="InterPro" id="IPR006172">
    <property type="entry name" value="DNA-dir_DNA_pol_B"/>
</dbReference>
<dbReference type="InterPro" id="IPR017964">
    <property type="entry name" value="DNA-dir_DNA_pol_B_CS"/>
</dbReference>
<dbReference type="InterPro" id="IPR006133">
    <property type="entry name" value="DNA-dir_DNA_pol_B_exonuc"/>
</dbReference>
<dbReference type="InterPro" id="IPR006134">
    <property type="entry name" value="DNA-dir_DNA_pol_B_multi_dom"/>
</dbReference>
<dbReference type="InterPro" id="IPR043502">
    <property type="entry name" value="DNA/RNA_pol_sf"/>
</dbReference>
<dbReference type="InterPro" id="IPR024647">
    <property type="entry name" value="DNA_pol_a_cat_su_N"/>
</dbReference>
<dbReference type="InterPro" id="IPR042087">
    <property type="entry name" value="DNA_pol_B_thumb"/>
</dbReference>
<dbReference type="InterPro" id="IPR023211">
    <property type="entry name" value="DNA_pol_palm_dom_sf"/>
</dbReference>
<dbReference type="InterPro" id="IPR038256">
    <property type="entry name" value="Pol_alpha_znc_sf"/>
</dbReference>
<dbReference type="InterPro" id="IPR045846">
    <property type="entry name" value="POLBc_alpha"/>
</dbReference>
<dbReference type="InterPro" id="IPR012337">
    <property type="entry name" value="RNaseH-like_sf"/>
</dbReference>
<dbReference type="InterPro" id="IPR036397">
    <property type="entry name" value="RNaseH_sf"/>
</dbReference>
<dbReference type="InterPro" id="IPR015088">
    <property type="entry name" value="Znf_DNA-dir_DNA_pol_B_alpha"/>
</dbReference>
<dbReference type="NCBIfam" id="TIGR00592">
    <property type="entry name" value="pol2"/>
    <property type="match status" value="1"/>
</dbReference>
<dbReference type="PANTHER" id="PTHR45861">
    <property type="entry name" value="DNA POLYMERASE ALPHA CATALYTIC SUBUNIT"/>
    <property type="match status" value="1"/>
</dbReference>
<dbReference type="PANTHER" id="PTHR45861:SF1">
    <property type="entry name" value="DNA POLYMERASE ALPHA CATALYTIC SUBUNIT"/>
    <property type="match status" value="1"/>
</dbReference>
<dbReference type="Pfam" id="PF12254">
    <property type="entry name" value="DNA_pol_alpha_N"/>
    <property type="match status" value="1"/>
</dbReference>
<dbReference type="Pfam" id="PF00136">
    <property type="entry name" value="DNA_pol_B"/>
    <property type="match status" value="1"/>
</dbReference>
<dbReference type="Pfam" id="PF03104">
    <property type="entry name" value="DNA_pol_B_exo1"/>
    <property type="match status" value="1"/>
</dbReference>
<dbReference type="Pfam" id="PF08996">
    <property type="entry name" value="zf-DNA_Pol"/>
    <property type="match status" value="1"/>
</dbReference>
<dbReference type="PRINTS" id="PR00106">
    <property type="entry name" value="DNAPOLB"/>
</dbReference>
<dbReference type="SMART" id="SM00486">
    <property type="entry name" value="POLBc"/>
    <property type="match status" value="1"/>
</dbReference>
<dbReference type="SUPFAM" id="SSF56672">
    <property type="entry name" value="DNA/RNA polymerases"/>
    <property type="match status" value="1"/>
</dbReference>
<dbReference type="SUPFAM" id="SSF53098">
    <property type="entry name" value="Ribonuclease H-like"/>
    <property type="match status" value="1"/>
</dbReference>
<dbReference type="PROSITE" id="PS00116">
    <property type="entry name" value="DNA_POLYMERASE_B"/>
    <property type="match status" value="1"/>
</dbReference>
<organism>
    <name type="scientific">Saccharomyces cerevisiae (strain ATCC 204508 / S288c)</name>
    <name type="common">Baker's yeast</name>
    <dbReference type="NCBI Taxonomy" id="559292"/>
    <lineage>
        <taxon>Eukaryota</taxon>
        <taxon>Fungi</taxon>
        <taxon>Dikarya</taxon>
        <taxon>Ascomycota</taxon>
        <taxon>Saccharomycotina</taxon>
        <taxon>Saccharomycetes</taxon>
        <taxon>Saccharomycetales</taxon>
        <taxon>Saccharomycetaceae</taxon>
        <taxon>Saccharomyces</taxon>
    </lineage>
</organism>
<accession>P13382</accession>
<accession>D6W177</accession>
<comment type="function">
    <text evidence="4 8 10">Catalytic component of DNA polymerase alpha, which in complex with DNA primase (DNA polymerase alpha:primase) constitutes a replicative polymerase (PubMed:10898792, PubMed:22119860, PubMed:31488849). POL1 has a role in promoting telomere replication during interaction with CDC13 (PubMed:10898792).</text>
</comment>
<comment type="catalytic activity">
    <reaction evidence="8">
        <text>DNA(n) + a 2'-deoxyribonucleoside 5'-triphosphate = DNA(n+1) + diphosphate</text>
        <dbReference type="Rhea" id="RHEA:22508"/>
        <dbReference type="Rhea" id="RHEA-COMP:17339"/>
        <dbReference type="Rhea" id="RHEA-COMP:17340"/>
        <dbReference type="ChEBI" id="CHEBI:33019"/>
        <dbReference type="ChEBI" id="CHEBI:61560"/>
        <dbReference type="ChEBI" id="CHEBI:173112"/>
        <dbReference type="EC" id="2.7.7.7"/>
    </reaction>
</comment>
<comment type="subunit">
    <text evidence="4 6 7 9 12 13">DNA polymerase alpha:primase is a four subunit enzyme complex, which is assembled throughout the cell cycle, and consists of the two DNA polymerase subunits A POL1 and B POL12, and the DNA primase large PRI2 and small PRI1 subunits (PubMed:3061469). Subunit B POL12 binds to subunit A POL1 (PubMed:19494830). POL1 interacts with CDC13, POB3, SPT16 and MCM10 (PubMed:10898792, PubMed:16675460, PubMed:8621497, PubMed:9199353).</text>
</comment>
<comment type="interaction">
    <interactant intactId="EBI-6128">
        <id>P13382</id>
    </interactant>
    <interactant intactId="EBI-4187">
        <id>P32797</id>
        <label>CDC13</label>
    </interactant>
    <organismsDiffer>false</organismsDiffer>
    <experiments>4</experiments>
</comment>
<comment type="interaction">
    <interactant intactId="EBI-6128">
        <id>P13382</id>
    </interactant>
    <interactant intactId="EBI-5209">
        <id>Q01454</id>
        <label>CTF4</label>
    </interactant>
    <organismsDiffer>false</organismsDiffer>
    <experiments>14</experiments>
</comment>
<comment type="interaction">
    <interactant intactId="EBI-6128">
        <id>P13382</id>
    </interactant>
    <interactant intactId="EBI-6111">
        <id>P38121</id>
        <label>POL12</label>
    </interactant>
    <organismsDiffer>false</organismsDiffer>
    <experiments>5</experiments>
</comment>
<comment type="subcellular location">
    <subcellularLocation>
        <location>Nucleus</location>
    </subcellularLocation>
</comment>
<comment type="domain">
    <text evidence="1">The CysA-type zinc finger is required for PCNA-binding.</text>
</comment>
<comment type="miscellaneous">
    <text>In eukaryotes there are five DNA polymerases: alpha, beta, gamma, delta, and epsilon which are responsible for different reactions of DNA synthesis.</text>
</comment>
<comment type="miscellaneous">
    <text evidence="5">Present with 1050 molecules/cell in log phase SD medium.</text>
</comment>
<comment type="similarity">
    <text evidence="14">Belongs to the DNA polymerase type-B family.</text>
</comment>
<comment type="caution">
    <text evidence="15 16">A structure shows that CysB motif binds zinc but a later study has suggested it might bind 1 4Fe-4S cluster instead.</text>
</comment>
<protein>
    <recommendedName>
        <fullName>DNA polymerase alpha catalytic subunit A</fullName>
        <ecNumber>2.7.7.7</ecNumber>
    </recommendedName>
    <alternativeName>
        <fullName>DNA polymerase I subunit A</fullName>
    </alternativeName>
    <alternativeName>
        <fullName>DNA polymerase alpha:primase complex p180 subunit</fullName>
        <shortName>DNA polymerase-primase complex p180 subunit</shortName>
        <shortName>Pol alpha-primase complex p180 subunit</shortName>
    </alternativeName>
</protein>
<gene>
    <name type="primary">POL1</name>
    <name type="synonym">CDC17</name>
    <name type="ordered locus">YNL102W</name>
    <name type="ORF">N2181</name>
</gene>
<keyword id="KW-0002">3D-structure</keyword>
<keyword id="KW-0004">4Fe-4S</keyword>
<keyword id="KW-0007">Acetylation</keyword>
<keyword id="KW-0235">DNA replication</keyword>
<keyword id="KW-0238">DNA-binding</keyword>
<keyword id="KW-0239">DNA-directed DNA polymerase</keyword>
<keyword id="KW-0408">Iron</keyword>
<keyword id="KW-0411">Iron-sulfur</keyword>
<keyword id="KW-0479">Metal-binding</keyword>
<keyword id="KW-0548">Nucleotidyltransferase</keyword>
<keyword id="KW-0539">Nucleus</keyword>
<keyword id="KW-0597">Phosphoprotein</keyword>
<keyword id="KW-1185">Reference proteome</keyword>
<keyword id="KW-0808">Transferase</keyword>
<keyword id="KW-0862">Zinc</keyword>
<keyword id="KW-0863">Zinc-finger</keyword>
<feature type="initiator methionine" description="Removed" evidence="21">
    <location>
        <position position="1"/>
    </location>
</feature>
<feature type="chain" id="PRO_0000046440" description="DNA polymerase alpha catalytic subunit A">
    <location>
        <begin position="2"/>
        <end position="1468"/>
    </location>
</feature>
<feature type="zinc finger region" description="CysA-type" evidence="1">
    <location>
        <begin position="1287"/>
        <end position="1317"/>
    </location>
</feature>
<feature type="region of interest" description="Disordered" evidence="3">
    <location>
        <begin position="1"/>
        <end position="34"/>
    </location>
</feature>
<feature type="region of interest" description="Disordered" evidence="3">
    <location>
        <begin position="71"/>
        <end position="135"/>
    </location>
</feature>
<feature type="region of interest" description="Disordered" evidence="3">
    <location>
        <begin position="166"/>
        <end position="205"/>
    </location>
</feature>
<feature type="region of interest" description="Disordered" evidence="3">
    <location>
        <begin position="256"/>
        <end position="275"/>
    </location>
</feature>
<feature type="region of interest" description="Disordered" evidence="3">
    <location>
        <begin position="813"/>
        <end position="837"/>
    </location>
</feature>
<feature type="region of interest" description="DNA-binding" evidence="2">
    <location>
        <begin position="1246"/>
        <end position="1381"/>
    </location>
</feature>
<feature type="short sequence motif" description="CysB motif" evidence="1">
    <location>
        <begin position="1348"/>
        <end position="1372"/>
    </location>
</feature>
<feature type="compositionally biased region" description="Basic and acidic residues" evidence="3">
    <location>
        <begin position="1"/>
        <end position="12"/>
    </location>
</feature>
<feature type="compositionally biased region" description="Basic and acidic residues" evidence="3">
    <location>
        <begin position="71"/>
        <end position="80"/>
    </location>
</feature>
<feature type="compositionally biased region" description="Polar residues" evidence="3">
    <location>
        <begin position="166"/>
        <end position="176"/>
    </location>
</feature>
<feature type="compositionally biased region" description="Basic and acidic residues" evidence="3">
    <location>
        <begin position="183"/>
        <end position="205"/>
    </location>
</feature>
<feature type="compositionally biased region" description="Acidic residues" evidence="3">
    <location>
        <begin position="266"/>
        <end position="275"/>
    </location>
</feature>
<feature type="binding site" evidence="7 17">
    <location>
        <position position="1287"/>
    </location>
    <ligand>
        <name>Zn(2+)</name>
        <dbReference type="ChEBI" id="CHEBI:29105"/>
        <label>1</label>
    </ligand>
</feature>
<feature type="binding site" evidence="7 17">
    <location>
        <position position="1290"/>
    </location>
    <ligand>
        <name>Zn(2+)</name>
        <dbReference type="ChEBI" id="CHEBI:29105"/>
        <label>1</label>
    </ligand>
</feature>
<feature type="binding site" evidence="7 17">
    <location>
        <position position="1314"/>
    </location>
    <ligand>
        <name>Zn(2+)</name>
        <dbReference type="ChEBI" id="CHEBI:29105"/>
        <label>1</label>
    </ligand>
</feature>
<feature type="binding site" evidence="7 17">
    <location>
        <position position="1317"/>
    </location>
    <ligand>
        <name>Zn(2+)</name>
        <dbReference type="ChEBI" id="CHEBI:29105"/>
        <label>1</label>
    </ligand>
</feature>
<feature type="binding site" evidence="7 17">
    <location>
        <position position="1348"/>
    </location>
    <ligand>
        <name>Zn(2+)</name>
        <dbReference type="ChEBI" id="CHEBI:29105"/>
        <label>2</label>
    </ligand>
</feature>
<feature type="binding site" evidence="7 17">
    <location>
        <position position="1353"/>
    </location>
    <ligand>
        <name>Zn(2+)</name>
        <dbReference type="ChEBI" id="CHEBI:29105"/>
        <label>2</label>
    </ligand>
</feature>
<feature type="binding site" evidence="7 17">
    <location>
        <position position="1367"/>
    </location>
    <ligand>
        <name>Zn(2+)</name>
        <dbReference type="ChEBI" id="CHEBI:29105"/>
        <label>2</label>
    </ligand>
</feature>
<feature type="binding site" evidence="7 17">
    <location>
        <position position="1372"/>
    </location>
    <ligand>
        <name>Zn(2+)</name>
        <dbReference type="ChEBI" id="CHEBI:29105"/>
        <label>2</label>
    </ligand>
</feature>
<feature type="modified residue" description="N-acetylserine" evidence="21">
    <location>
        <position position="2"/>
    </location>
</feature>
<feature type="modified residue" description="Phosphoserine" evidence="19 20">
    <location>
        <position position="31"/>
    </location>
</feature>
<feature type="modified residue" description="Phosphoserine" evidence="20">
    <location>
        <position position="82"/>
    </location>
</feature>
<feature type="modified residue" description="Phosphoserine" evidence="20">
    <location>
        <position position="83"/>
    </location>
</feature>
<feature type="modified residue" description="Phosphoserine" evidence="20">
    <location>
        <position position="84"/>
    </location>
</feature>
<feature type="modified residue" description="Phosphoserine" evidence="20">
    <location>
        <position position="169"/>
    </location>
</feature>
<feature type="modified residue" description="Phosphoserine" evidence="18 20">
    <location>
        <position position="170"/>
    </location>
</feature>
<feature type="modified residue" description="Phosphothreonine" evidence="20">
    <location>
        <position position="172"/>
    </location>
</feature>
<feature type="modified residue" description="Phosphoserine" evidence="19 20">
    <location>
        <position position="240"/>
    </location>
</feature>
<feature type="modified residue" description="Phosphoserine" evidence="19 20">
    <location>
        <position position="274"/>
    </location>
</feature>
<feature type="modified residue" description="Phosphothreonine" evidence="20">
    <location>
        <position position="309"/>
    </location>
</feature>
<feature type="modified residue" description="Phosphothreonine" evidence="18 20">
    <location>
        <position position="313"/>
    </location>
</feature>
<feature type="sequence variant" description="In temperature sensitive mutant." evidence="11">
    <original>G</original>
    <variation>R</variation>
    <location>
        <position position="493"/>
    </location>
</feature>
<feature type="mutagenesis site" description="Increase in length of X' and Y' telomeres. No effect on telomere position effect. Reduced interaction with CDC13." evidence="4">
    <original>D</original>
    <variation>N</variation>
    <location>
        <position position="236"/>
    </location>
</feature>
<feature type="mutagenesis site" description="Increase in length of X' and Y' telomeres. Reduced interaction with CDC13." evidence="4">
    <original>E</original>
    <variation>K</variation>
    <location>
        <position position="238"/>
    </location>
</feature>
<feature type="mutagenesis site" description="Increase in length of X' and Y' telomeres. Reduced interaction with CDC13." evidence="4">
    <original>P</original>
    <variation>T</variation>
    <location>
        <position position="241"/>
    </location>
</feature>
<feature type="mutagenesis site" description="Increases rates of C-to-A transversion substitutions." evidence="10">
    <original>L</original>
    <variation>M</variation>
    <location>
        <position position="868"/>
    </location>
</feature>
<feature type="sequence conflict" description="In Ref. 1; AAA34888." evidence="14" ref="1">
    <original>MI</original>
    <variation>IV</variation>
    <location>
        <begin position="759"/>
        <end position="760"/>
    </location>
</feature>
<feature type="helix" evidence="25">
    <location>
        <begin position="141"/>
        <end position="148"/>
    </location>
</feature>
<feature type="helix" evidence="23">
    <location>
        <begin position="217"/>
        <end position="239"/>
    </location>
</feature>
<feature type="strand" evidence="26">
    <location>
        <begin position="351"/>
        <end position="362"/>
    </location>
</feature>
<feature type="strand" evidence="26">
    <location>
        <begin position="365"/>
        <end position="373"/>
    </location>
</feature>
<feature type="strand" evidence="26">
    <location>
        <begin position="379"/>
        <end position="386"/>
    </location>
</feature>
<feature type="strand" evidence="26">
    <location>
        <begin position="390"/>
        <end position="397"/>
    </location>
</feature>
<feature type="helix" evidence="26">
    <location>
        <begin position="403"/>
        <end position="418"/>
    </location>
</feature>
<feature type="strand" evidence="26">
    <location>
        <begin position="425"/>
        <end position="431"/>
    </location>
</feature>
<feature type="strand" evidence="26">
    <location>
        <begin position="441"/>
        <end position="453"/>
    </location>
</feature>
<feature type="strand" evidence="26">
    <location>
        <begin position="469"/>
        <end position="476"/>
    </location>
</feature>
<feature type="helix" evidence="26">
    <location>
        <begin position="481"/>
        <end position="488"/>
    </location>
</feature>
<feature type="strand" evidence="26">
    <location>
        <begin position="496"/>
        <end position="499"/>
    </location>
</feature>
<feature type="strand" evidence="26">
    <location>
        <begin position="503"/>
        <end position="506"/>
    </location>
</feature>
<feature type="strand" evidence="26">
    <location>
        <begin position="511"/>
        <end position="520"/>
    </location>
</feature>
<feature type="helix" evidence="26">
    <location>
        <begin position="522"/>
        <end position="524"/>
    </location>
</feature>
<feature type="strand" evidence="26">
    <location>
        <begin position="525"/>
        <end position="527"/>
    </location>
</feature>
<feature type="strand" evidence="26">
    <location>
        <begin position="536"/>
        <end position="548"/>
    </location>
</feature>
<feature type="turn" evidence="26">
    <location>
        <begin position="549"/>
        <end position="552"/>
    </location>
</feature>
<feature type="strand" evidence="26">
    <location>
        <begin position="553"/>
        <end position="567"/>
    </location>
</feature>
<feature type="strand" evidence="24">
    <location>
        <begin position="569"/>
        <end position="571"/>
    </location>
</feature>
<feature type="strand" evidence="26">
    <location>
        <begin position="580"/>
        <end position="586"/>
    </location>
</feature>
<feature type="strand" evidence="26">
    <location>
        <begin position="589"/>
        <end position="593"/>
    </location>
</feature>
<feature type="helix" evidence="26">
    <location>
        <begin position="598"/>
        <end position="605"/>
    </location>
</feature>
<feature type="strand" evidence="26">
    <location>
        <begin position="606"/>
        <end position="612"/>
    </location>
</feature>
<feature type="helix" evidence="26">
    <location>
        <begin position="616"/>
        <end position="630"/>
    </location>
</feature>
<feature type="strand" evidence="26">
    <location>
        <begin position="633"/>
        <end position="639"/>
    </location>
</feature>
<feature type="turn" evidence="26">
    <location>
        <begin position="640"/>
        <end position="643"/>
    </location>
</feature>
<feature type="helix" evidence="26">
    <location>
        <begin position="644"/>
        <end position="654"/>
    </location>
</feature>
<feature type="helix" evidence="26">
    <location>
        <begin position="660"/>
        <end position="663"/>
    </location>
</feature>
<feature type="strand" evidence="26">
    <location>
        <begin position="664"/>
        <end position="666"/>
    </location>
</feature>
<feature type="turn" evidence="27">
    <location>
        <begin position="673"/>
        <end position="676"/>
    </location>
</feature>
<feature type="helix" evidence="26">
    <location>
        <begin position="682"/>
        <end position="691"/>
    </location>
</feature>
<feature type="strand" evidence="26">
    <location>
        <begin position="694"/>
        <end position="698"/>
    </location>
</feature>
<feature type="helix" evidence="26">
    <location>
        <begin position="702"/>
        <end position="706"/>
    </location>
</feature>
<feature type="helix" evidence="26">
    <location>
        <begin position="716"/>
        <end position="724"/>
    </location>
</feature>
<feature type="helix" evidence="26">
    <location>
        <begin position="739"/>
        <end position="742"/>
    </location>
</feature>
<feature type="helix" evidence="26">
    <location>
        <begin position="744"/>
        <end position="767"/>
    </location>
</feature>
<feature type="helix" evidence="26">
    <location>
        <begin position="770"/>
        <end position="781"/>
    </location>
</feature>
<feature type="helix" evidence="26">
    <location>
        <begin position="785"/>
        <end position="790"/>
    </location>
</feature>
<feature type="helix" evidence="26">
    <location>
        <begin position="794"/>
        <end position="807"/>
    </location>
</feature>
<feature type="strand" evidence="26">
    <location>
        <begin position="854"/>
        <end position="856"/>
    </location>
</feature>
<feature type="strand" evidence="26">
    <location>
        <begin position="860"/>
        <end position="864"/>
    </location>
</feature>
<feature type="helix" evidence="26">
    <location>
        <begin position="868"/>
        <end position="875"/>
    </location>
</feature>
<feature type="turn" evidence="26">
    <location>
        <begin position="880"/>
        <end position="882"/>
    </location>
</feature>
<feature type="helix" evidence="26">
    <location>
        <begin position="905"/>
        <end position="926"/>
    </location>
</feature>
<feature type="helix" evidence="26">
    <location>
        <begin position="930"/>
        <end position="947"/>
    </location>
</feature>
<feature type="helix" evidence="26">
    <location>
        <begin position="948"/>
        <end position="950"/>
    </location>
</feature>
<feature type="helix" evidence="26">
    <location>
        <begin position="951"/>
        <end position="955"/>
    </location>
</feature>
<feature type="helix" evidence="26">
    <location>
        <begin position="964"/>
        <end position="987"/>
    </location>
</feature>
<feature type="strand" evidence="26">
    <location>
        <begin position="991"/>
        <end position="995"/>
    </location>
</feature>
<feature type="strand" evidence="26">
    <location>
        <begin position="997"/>
        <end position="1003"/>
    </location>
</feature>
<feature type="helix" evidence="26">
    <location>
        <begin position="1009"/>
        <end position="1026"/>
    </location>
</feature>
<feature type="strand" evidence="26">
    <location>
        <begin position="1033"/>
        <end position="1045"/>
    </location>
</feature>
<feature type="strand" evidence="26">
    <location>
        <begin position="1048"/>
        <end position="1054"/>
    </location>
</feature>
<feature type="strand" evidence="26">
    <location>
        <begin position="1064"/>
        <end position="1071"/>
    </location>
</feature>
<feature type="helix" evidence="27">
    <location>
        <begin position="1072"/>
        <end position="1074"/>
    </location>
</feature>
<feature type="helix" evidence="26">
    <location>
        <begin position="1080"/>
        <end position="1093"/>
    </location>
</feature>
<feature type="strand" evidence="26">
    <location>
        <begin position="1094"/>
        <end position="1097"/>
    </location>
</feature>
<feature type="helix" evidence="26">
    <location>
        <begin position="1101"/>
        <end position="1118"/>
    </location>
</feature>
<feature type="helix" evidence="26">
    <location>
        <begin position="1124"/>
        <end position="1127"/>
    </location>
</feature>
<feature type="strand" evidence="26">
    <location>
        <begin position="1129"/>
        <end position="1132"/>
    </location>
</feature>
<feature type="helix" evidence="26">
    <location>
        <begin position="1137"/>
        <end position="1139"/>
    </location>
</feature>
<feature type="helix" evidence="26">
    <location>
        <begin position="1143"/>
        <end position="1145"/>
    </location>
</feature>
<feature type="helix" evidence="26">
    <location>
        <begin position="1147"/>
        <end position="1158"/>
    </location>
</feature>
<feature type="strand" evidence="26">
    <location>
        <begin position="1167"/>
        <end position="1173"/>
    </location>
</feature>
<feature type="turn" evidence="26">
    <location>
        <begin position="1189"/>
        <end position="1192"/>
    </location>
</feature>
<feature type="strand" evidence="26">
    <location>
        <begin position="1193"/>
        <end position="1195"/>
    </location>
</feature>
<feature type="helix" evidence="26">
    <location>
        <begin position="1196"/>
        <end position="1200"/>
    </location>
</feature>
<feature type="helix" evidence="26">
    <location>
        <begin position="1202"/>
        <end position="1204"/>
    </location>
</feature>
<feature type="helix" evidence="26">
    <location>
        <begin position="1210"/>
        <end position="1215"/>
    </location>
</feature>
<feature type="turn" evidence="26">
    <location>
        <begin position="1216"/>
        <end position="1218"/>
    </location>
</feature>
<feature type="helix" evidence="26">
    <location>
        <begin position="1219"/>
        <end position="1225"/>
    </location>
</feature>
<feature type="turn" evidence="27">
    <location>
        <begin position="1226"/>
        <end position="1228"/>
    </location>
</feature>
<feature type="helix" evidence="27">
    <location>
        <begin position="1234"/>
        <end position="1239"/>
    </location>
</feature>
<feature type="turn" evidence="22">
    <location>
        <begin position="1274"/>
        <end position="1279"/>
    </location>
</feature>
<feature type="strand" evidence="22">
    <location>
        <begin position="1283"/>
        <end position="1286"/>
    </location>
</feature>
<feature type="turn" evidence="22">
    <location>
        <begin position="1288"/>
        <end position="1290"/>
    </location>
</feature>
<feature type="strand" evidence="22">
    <location>
        <begin position="1293"/>
        <end position="1296"/>
    </location>
</feature>
<feature type="strand" evidence="22">
    <location>
        <begin position="1298"/>
        <end position="1300"/>
    </location>
</feature>
<feature type="strand" evidence="22">
    <location>
        <begin position="1303"/>
        <end position="1308"/>
    </location>
</feature>
<feature type="strand" evidence="22">
    <location>
        <begin position="1311"/>
        <end position="1314"/>
    </location>
</feature>
<feature type="turn" evidence="22">
    <location>
        <begin position="1315"/>
        <end position="1317"/>
    </location>
</feature>
<feature type="helix" evidence="22">
    <location>
        <begin position="1323"/>
        <end position="1343"/>
    </location>
</feature>
<feature type="strand" evidence="22">
    <location>
        <begin position="1346"/>
        <end position="1349"/>
    </location>
</feature>
<feature type="turn" evidence="22">
    <location>
        <begin position="1351"/>
        <end position="1353"/>
    </location>
</feature>
<feature type="strand" evidence="22">
    <location>
        <begin position="1356"/>
        <end position="1358"/>
    </location>
</feature>
<feature type="strand" evidence="22">
    <location>
        <begin position="1375"/>
        <end position="1380"/>
    </location>
</feature>
<feature type="helix" evidence="22">
    <location>
        <begin position="1382"/>
        <end position="1395"/>
    </location>
</feature>
<feature type="helix" evidence="22">
    <location>
        <begin position="1398"/>
        <end position="1402"/>
    </location>
</feature>
<feature type="helix" evidence="22">
    <location>
        <begin position="1424"/>
        <end position="1433"/>
    </location>
</feature>
<feature type="helix" evidence="22">
    <location>
        <begin position="1435"/>
        <end position="1449"/>
    </location>
</feature>
<sequence length="1468" mass="166809">MSSKSEKLEKLRKLQAARNGTSIDDYEGDESDGDRIYDEIDEKEYRARKRQELLHDDFVVDDDGVGYVDRGVEEDWREVDNSSSDEDTGNLASKDSKRKKNIKREKDHQITDMLRTQHSKSTLLAHAKKSQKKSIPIDNFDDILGEFESGEVEKPNILLPSKLRENLNSSPTSEFKSSIKRVNGNDESSHDAGISKKVKIDPDSSTDKYLEIESSPLKLQSRKLRYANDVQDLLDDVENSPVVATKRQNVLQDTLLANPPSAQSLADEEDDEDSDEDIILKRRTMRSVTTTRRVNIDSRSNPSTSPFVTAPGTPIGIKGLTPSKSLQSNTDVATLAVNVKKEDVVDPETDTFQMFWLDYCEVNNTLILFGKVKLKDDNCVSAMVQINGLCRELFFLPREGKTPTDIHEEIIPLLMDKYGLDNIRAKPQKMKYSFELPDIPSESDYLKVLLPYQTPKSSRDTIPSDLSSDTFYHVFGGNSNIFESFVIQNRIMGPCWLDIKGADFNSIRNASHCAVEVSVDKPQNITPTTTKTMPNLRCLSLSIQTLMNPKENKQEIVSITLSAYRNISLDSPIPENIKPDDLCTLVRPPQSTSFPLGLAALAKQKLPGRVRLFNNEKAMLSCFCAMLKVEDPDVIIGHRLQNVYLDVLAHRMHDLNIPTFSSIGRRLRRTWPEKFGRGNSNMNHFFISDICSGRLICDIANEMGQSLTPKCQSWDLSEMYQVTCEKEHKPLDIDYQNPQYQNDVNSMTMALQENITNCMISAEVSYRIQLLTLTKQLTNLAGNAWAQTLGGTRAGRNEYILLHEFSRNGFIVPDKEGNRSRAQKQRQNEENADAPVNSKKAKYQGGLVFEPEKGLHKNYVLVMDFNSLYPSIIQEFNICFTTVDRNKEDIDELPSVPPSEVDQGVLPRLLANLVDRRREVKKVMKTETDPHKRVQCDIRQQALKLTANSMYGCLGYVNSRFYAKPLAMLVTNKGREILMNTRQLAESMNLLVVYGDTDSVMIDTGCDNYADAIKIGLGFKRLVNERYRLLEIDIDNVFKKLLLHAKKKYAALTVNLDKNGNGTTVLEVKGLDMKRREFCPLSRDVSIHVLNTILSDKDPEEALQEVYDYLEDIRIKVETNNIRIDKYKINMKLSKDPKAYPGGKNMPAVQVALRMRKAGRVVKAGSVITFVITKQDEIDNAADTPALSVAERAHALNEVMIKSNNLIPDPQYYLEKQIFAPVERLLERIDSFNVVRLSEALGLDSKKYFRREGGNNNGEDINNLQPLETTITDVERFKDTVTLELSCPSCDKRFPFGGIVSSNYYRVSYNGLQCKHCEQLFTPLQLTSQIEHSIRAHISLYYAGWLQCDDSTCGIVTRQVSVFGKRCLNDGCTGVMRYKYSDKQLYNQLLYFDSLFDCEKNKKQELKPIYLPDDLDYPKEQLTESSIKALTEQNRELMETGRSVVQKYLNDCGRRYVDMTSIFDFMLN</sequence>
<name>DPOLA_YEAST</name>